<dbReference type="EC" id="3.6.5.2" evidence="2"/>
<dbReference type="EMBL" id="X72966">
    <property type="protein sequence ID" value="CAA51470.1"/>
    <property type="molecule type" value="Genomic_DNA"/>
</dbReference>
<dbReference type="EMBL" id="AK005362">
    <property type="protein sequence ID" value="BAB23976.1"/>
    <property type="molecule type" value="mRNA"/>
</dbReference>
<dbReference type="EMBL" id="AK158727">
    <property type="protein sequence ID" value="BAE34630.1"/>
    <property type="molecule type" value="mRNA"/>
</dbReference>
<dbReference type="EMBL" id="AK161975">
    <property type="protein sequence ID" value="BAE36661.1"/>
    <property type="molecule type" value="mRNA"/>
</dbReference>
<dbReference type="EMBL" id="BC053519">
    <property type="protein sequence ID" value="AAH53519.1"/>
    <property type="molecule type" value="mRNA"/>
</dbReference>
<dbReference type="CCDS" id="CCDS22379.1"/>
<dbReference type="PIR" id="S34070">
    <property type="entry name" value="S34070"/>
</dbReference>
<dbReference type="RefSeq" id="NP_001159871.1">
    <property type="nucleotide sequence ID" value="NM_001166399.3"/>
</dbReference>
<dbReference type="RefSeq" id="NP_001314976.1">
    <property type="nucleotide sequence ID" value="NM_001328047.2"/>
</dbReference>
<dbReference type="RefSeq" id="NP_001365821.1">
    <property type="nucleotide sequence ID" value="NM_001378892.1"/>
</dbReference>
<dbReference type="RefSeq" id="NP_001365822.1">
    <property type="nucleotide sequence ID" value="NM_001378893.1"/>
</dbReference>
<dbReference type="RefSeq" id="NP_033027.1">
    <property type="nucleotide sequence ID" value="NM_009001.7"/>
</dbReference>
<dbReference type="RefSeq" id="XP_006509666.1">
    <property type="nucleotide sequence ID" value="XM_006509603.3"/>
</dbReference>
<dbReference type="RefSeq" id="XP_036009729.1">
    <property type="nucleotide sequence ID" value="XM_036153836.1"/>
</dbReference>
<dbReference type="SMR" id="P63011"/>
<dbReference type="BioGRID" id="202544">
    <property type="interactions" value="26"/>
</dbReference>
<dbReference type="CORUM" id="P63011"/>
<dbReference type="DIP" id="DIP-31051N"/>
<dbReference type="FunCoup" id="P63011">
    <property type="interactions" value="772"/>
</dbReference>
<dbReference type="IntAct" id="P63011">
    <property type="interactions" value="51"/>
</dbReference>
<dbReference type="MINT" id="P63011"/>
<dbReference type="STRING" id="10090.ENSMUSP00000105719"/>
<dbReference type="GlyGen" id="P63011">
    <property type="glycosylation" value="3 sites, 1 N-linked glycan (1 site), 1 O-linked glycan (2 sites)"/>
</dbReference>
<dbReference type="iPTMnet" id="P63011"/>
<dbReference type="MetOSite" id="P63011"/>
<dbReference type="PhosphoSitePlus" id="P63011"/>
<dbReference type="SwissPalm" id="P63011"/>
<dbReference type="jPOST" id="P63011"/>
<dbReference type="PaxDb" id="10090-ENSMUSP00000105719"/>
<dbReference type="PeptideAtlas" id="P63011"/>
<dbReference type="ProteomicsDB" id="300290"/>
<dbReference type="Pumba" id="P63011"/>
<dbReference type="Antibodypedia" id="1005">
    <property type="antibodies" value="390 antibodies from 39 providers"/>
</dbReference>
<dbReference type="DNASU" id="19339"/>
<dbReference type="Ensembl" id="ENSMUST00000034301.12">
    <property type="protein sequence ID" value="ENSMUSP00000034301.6"/>
    <property type="gene ID" value="ENSMUSG00000031840.15"/>
</dbReference>
<dbReference type="Ensembl" id="ENSMUST00000110090.8">
    <property type="protein sequence ID" value="ENSMUSP00000105717.2"/>
    <property type="gene ID" value="ENSMUSG00000031840.15"/>
</dbReference>
<dbReference type="Ensembl" id="ENSMUST00000110092.6">
    <property type="protein sequence ID" value="ENSMUSP00000105719.5"/>
    <property type="gene ID" value="ENSMUSG00000031840.15"/>
</dbReference>
<dbReference type="Ensembl" id="ENSMUST00000110093.9">
    <property type="protein sequence ID" value="ENSMUSP00000105720.3"/>
    <property type="gene ID" value="ENSMUSG00000031840.15"/>
</dbReference>
<dbReference type="GeneID" id="19339"/>
<dbReference type="KEGG" id="mmu:19339"/>
<dbReference type="UCSC" id="uc009mbi.2">
    <property type="organism name" value="mouse"/>
</dbReference>
<dbReference type="AGR" id="MGI:97843"/>
<dbReference type="CTD" id="5864"/>
<dbReference type="MGI" id="MGI:97843">
    <property type="gene designation" value="Rab3a"/>
</dbReference>
<dbReference type="VEuPathDB" id="HostDB:ENSMUSG00000031840"/>
<dbReference type="eggNOG" id="KOG0093">
    <property type="taxonomic scope" value="Eukaryota"/>
</dbReference>
<dbReference type="GeneTree" id="ENSGT00940000158959"/>
<dbReference type="HOGENOM" id="CLU_041217_10_1_1"/>
<dbReference type="InParanoid" id="P63011"/>
<dbReference type="OMA" id="CSMARDI"/>
<dbReference type="OrthoDB" id="9989112at2759"/>
<dbReference type="PhylomeDB" id="P63011"/>
<dbReference type="TreeFam" id="TF313199"/>
<dbReference type="Reactome" id="R-MMU-181429">
    <property type="pathway name" value="Serotonin Neurotransmitter Release Cycle"/>
</dbReference>
<dbReference type="Reactome" id="R-MMU-181430">
    <property type="pathway name" value="Norepinephrine Neurotransmitter Release Cycle"/>
</dbReference>
<dbReference type="Reactome" id="R-MMU-210500">
    <property type="pathway name" value="Glutamate Neurotransmitter Release Cycle"/>
</dbReference>
<dbReference type="Reactome" id="R-MMU-212676">
    <property type="pathway name" value="Dopamine Neurotransmitter Release Cycle"/>
</dbReference>
<dbReference type="Reactome" id="R-MMU-264642">
    <property type="pathway name" value="Acetylcholine Neurotransmitter Release Cycle"/>
</dbReference>
<dbReference type="Reactome" id="R-MMU-6798695">
    <property type="pathway name" value="Neutrophil degranulation"/>
</dbReference>
<dbReference type="Reactome" id="R-MMU-8873719">
    <property type="pathway name" value="RAB geranylgeranylation"/>
</dbReference>
<dbReference type="Reactome" id="R-MMU-8876198">
    <property type="pathway name" value="RAB GEFs exchange GTP for GDP on RABs"/>
</dbReference>
<dbReference type="Reactome" id="R-MMU-888590">
    <property type="pathway name" value="GABA synthesis, release, reuptake and degradation"/>
</dbReference>
<dbReference type="BioGRID-ORCS" id="19339">
    <property type="hits" value="3 hits in 78 CRISPR screens"/>
</dbReference>
<dbReference type="CD-CODE" id="CE726F99">
    <property type="entry name" value="Postsynaptic density"/>
</dbReference>
<dbReference type="ChiTaRS" id="Rab3a">
    <property type="organism name" value="mouse"/>
</dbReference>
<dbReference type="PRO" id="PR:P63011"/>
<dbReference type="Proteomes" id="UP000000589">
    <property type="component" value="Chromosome 8"/>
</dbReference>
<dbReference type="RNAct" id="P63011">
    <property type="molecule type" value="protein"/>
</dbReference>
<dbReference type="Bgee" id="ENSMUSG00000031840">
    <property type="expression patterns" value="Expressed in primary visual cortex and 153 other cell types or tissues"/>
</dbReference>
<dbReference type="ExpressionAtlas" id="P63011">
    <property type="expression patterns" value="baseline and differential"/>
</dbReference>
<dbReference type="GO" id="GO:0001669">
    <property type="term" value="C:acrosomal vesicle"/>
    <property type="evidence" value="ECO:0000314"/>
    <property type="project" value="MGI"/>
</dbReference>
<dbReference type="GO" id="GO:0030424">
    <property type="term" value="C:axon"/>
    <property type="evidence" value="ECO:0000250"/>
    <property type="project" value="ParkinsonsUK-UCL"/>
</dbReference>
<dbReference type="GO" id="GO:0060203">
    <property type="term" value="C:clathrin-sculpted glutamate transport vesicle membrane"/>
    <property type="evidence" value="ECO:0000304"/>
    <property type="project" value="Reactome"/>
</dbReference>
<dbReference type="GO" id="GO:0005829">
    <property type="term" value="C:cytosol"/>
    <property type="evidence" value="ECO:0007669"/>
    <property type="project" value="UniProtKB-SubCell"/>
</dbReference>
<dbReference type="GO" id="GO:0005768">
    <property type="term" value="C:endosome"/>
    <property type="evidence" value="ECO:0000314"/>
    <property type="project" value="MGI"/>
</dbReference>
<dbReference type="GO" id="GO:0005764">
    <property type="term" value="C:lysosome"/>
    <property type="evidence" value="ECO:0007669"/>
    <property type="project" value="UniProtKB-SubCell"/>
</dbReference>
<dbReference type="GO" id="GO:0048471">
    <property type="term" value="C:perinuclear region of cytoplasm"/>
    <property type="evidence" value="ECO:0007669"/>
    <property type="project" value="Ensembl"/>
</dbReference>
<dbReference type="GO" id="GO:0005886">
    <property type="term" value="C:plasma membrane"/>
    <property type="evidence" value="ECO:0007669"/>
    <property type="project" value="UniProtKB-SubCell"/>
</dbReference>
<dbReference type="GO" id="GO:0098794">
    <property type="term" value="C:postsynapse"/>
    <property type="evidence" value="ECO:0000314"/>
    <property type="project" value="UniProtKB"/>
</dbReference>
<dbReference type="GO" id="GO:0098793">
    <property type="term" value="C:presynapse"/>
    <property type="evidence" value="ECO:0000314"/>
    <property type="project" value="UniProtKB"/>
</dbReference>
<dbReference type="GO" id="GO:0048786">
    <property type="term" value="C:presynaptic active zone"/>
    <property type="evidence" value="ECO:0000314"/>
    <property type="project" value="UniProtKB"/>
</dbReference>
<dbReference type="GO" id="GO:0008021">
    <property type="term" value="C:synaptic vesicle"/>
    <property type="evidence" value="ECO:0000314"/>
    <property type="project" value="MGI"/>
</dbReference>
<dbReference type="GO" id="GO:0030672">
    <property type="term" value="C:synaptic vesicle membrane"/>
    <property type="evidence" value="ECO:0000314"/>
    <property type="project" value="SynGO"/>
</dbReference>
<dbReference type="GO" id="GO:0043195">
    <property type="term" value="C:terminal bouton"/>
    <property type="evidence" value="ECO:0000314"/>
    <property type="project" value="ParkinsonsUK-UCL"/>
</dbReference>
<dbReference type="GO" id="GO:0005525">
    <property type="term" value="F:GTP binding"/>
    <property type="evidence" value="ECO:0007669"/>
    <property type="project" value="UniProtKB-KW"/>
</dbReference>
<dbReference type="GO" id="GO:0030742">
    <property type="term" value="F:GTP-dependent protein binding"/>
    <property type="evidence" value="ECO:0000353"/>
    <property type="project" value="MGI"/>
</dbReference>
<dbReference type="GO" id="GO:0003924">
    <property type="term" value="F:GTPase activity"/>
    <property type="evidence" value="ECO:0007669"/>
    <property type="project" value="Ensembl"/>
</dbReference>
<dbReference type="GO" id="GO:0031489">
    <property type="term" value="F:myosin V binding"/>
    <property type="evidence" value="ECO:0007669"/>
    <property type="project" value="Ensembl"/>
</dbReference>
<dbReference type="GO" id="GO:0030674">
    <property type="term" value="F:protein-macromolecule adaptor activity"/>
    <property type="evidence" value="ECO:0000314"/>
    <property type="project" value="MGI"/>
</dbReference>
<dbReference type="GO" id="GO:0060478">
    <property type="term" value="P:acrosomal vesicle exocytosis"/>
    <property type="evidence" value="ECO:0007669"/>
    <property type="project" value="Ensembl"/>
</dbReference>
<dbReference type="GO" id="GO:0007409">
    <property type="term" value="P:axonogenesis"/>
    <property type="evidence" value="ECO:0000315"/>
    <property type="project" value="MGI"/>
</dbReference>
<dbReference type="GO" id="GO:0017156">
    <property type="term" value="P:calcium-ion regulated exocytosis"/>
    <property type="evidence" value="ECO:0000315"/>
    <property type="project" value="UniProtKB"/>
</dbReference>
<dbReference type="GO" id="GO:0051649">
    <property type="term" value="P:establishment of localization in cell"/>
    <property type="evidence" value="ECO:0000353"/>
    <property type="project" value="MGI"/>
</dbReference>
<dbReference type="GO" id="GO:0061670">
    <property type="term" value="P:evoked neurotransmitter secretion"/>
    <property type="evidence" value="ECO:0000315"/>
    <property type="project" value="ParkinsonsUK-UCL"/>
</dbReference>
<dbReference type="GO" id="GO:0030073">
    <property type="term" value="P:insulin secretion"/>
    <property type="evidence" value="ECO:0000353"/>
    <property type="project" value="MGI"/>
</dbReference>
<dbReference type="GO" id="GO:0030324">
    <property type="term" value="P:lung development"/>
    <property type="evidence" value="ECO:0000315"/>
    <property type="project" value="MGI"/>
</dbReference>
<dbReference type="GO" id="GO:0032418">
    <property type="term" value="P:lysosome localization"/>
    <property type="evidence" value="ECO:0007669"/>
    <property type="project" value="Ensembl"/>
</dbReference>
<dbReference type="GO" id="GO:0048790">
    <property type="term" value="P:maintenance of presynaptic active zone structure"/>
    <property type="evidence" value="ECO:0000315"/>
    <property type="project" value="MGI"/>
</dbReference>
<dbReference type="GO" id="GO:0007005">
    <property type="term" value="P:mitochondrion organization"/>
    <property type="evidence" value="ECO:0000315"/>
    <property type="project" value="MGI"/>
</dbReference>
<dbReference type="GO" id="GO:0007274">
    <property type="term" value="P:neuromuscular synaptic transmission"/>
    <property type="evidence" value="ECO:0000315"/>
    <property type="project" value="MGI"/>
</dbReference>
<dbReference type="GO" id="GO:0001778">
    <property type="term" value="P:plasma membrane repair"/>
    <property type="evidence" value="ECO:0007669"/>
    <property type="project" value="Ensembl"/>
</dbReference>
<dbReference type="GO" id="GO:1903307">
    <property type="term" value="P:positive regulation of regulated secretory pathway"/>
    <property type="evidence" value="ECO:0007669"/>
    <property type="project" value="Ensembl"/>
</dbReference>
<dbReference type="GO" id="GO:0009791">
    <property type="term" value="P:post-embryonic development"/>
    <property type="evidence" value="ECO:0000315"/>
    <property type="project" value="MGI"/>
</dbReference>
<dbReference type="GO" id="GO:0017157">
    <property type="term" value="P:regulation of exocytosis"/>
    <property type="evidence" value="ECO:0000314"/>
    <property type="project" value="MGI"/>
</dbReference>
<dbReference type="GO" id="GO:1900271">
    <property type="term" value="P:regulation of long-term synaptic potentiation"/>
    <property type="evidence" value="ECO:0000304"/>
    <property type="project" value="ParkinsonsUK-UCL"/>
</dbReference>
<dbReference type="GO" id="GO:1905684">
    <property type="term" value="P:regulation of plasma membrane repair"/>
    <property type="evidence" value="ECO:0007669"/>
    <property type="project" value="Ensembl"/>
</dbReference>
<dbReference type="GO" id="GO:0099161">
    <property type="term" value="P:regulation of presynaptic dense core granule exocytosis"/>
    <property type="evidence" value="ECO:0000314"/>
    <property type="project" value="SynGO"/>
</dbReference>
<dbReference type="GO" id="GO:0048172">
    <property type="term" value="P:regulation of short-term neuronal synaptic plasticity"/>
    <property type="evidence" value="ECO:0000315"/>
    <property type="project" value="ParkinsonsUK-UCL"/>
</dbReference>
<dbReference type="GO" id="GO:0031630">
    <property type="term" value="P:regulation of synaptic vesicle fusion to presynaptic active zone membrane"/>
    <property type="evidence" value="ECO:0000314"/>
    <property type="project" value="SynGO"/>
</dbReference>
<dbReference type="GO" id="GO:0003016">
    <property type="term" value="P:respiratory system process"/>
    <property type="evidence" value="ECO:0000315"/>
    <property type="project" value="MGI"/>
</dbReference>
<dbReference type="GO" id="GO:0051602">
    <property type="term" value="P:response to electrical stimulus"/>
    <property type="evidence" value="ECO:0000315"/>
    <property type="project" value="MGI"/>
</dbReference>
<dbReference type="GO" id="GO:0050975">
    <property type="term" value="P:sensory perception of touch"/>
    <property type="evidence" value="ECO:0000315"/>
    <property type="project" value="MGI"/>
</dbReference>
<dbReference type="GO" id="GO:0097091">
    <property type="term" value="P:synaptic vesicle clustering"/>
    <property type="evidence" value="ECO:0000315"/>
    <property type="project" value="UniProtKB"/>
</dbReference>
<dbReference type="GO" id="GO:0016079">
    <property type="term" value="P:synaptic vesicle exocytosis"/>
    <property type="evidence" value="ECO:0000315"/>
    <property type="project" value="MGI"/>
</dbReference>
<dbReference type="GO" id="GO:0016188">
    <property type="term" value="P:synaptic vesicle maturation"/>
    <property type="evidence" value="ECO:0000315"/>
    <property type="project" value="MGI"/>
</dbReference>
<dbReference type="GO" id="GO:0036465">
    <property type="term" value="P:synaptic vesicle recycling"/>
    <property type="evidence" value="ECO:0000250"/>
    <property type="project" value="ParkinsonsUK-UCL"/>
</dbReference>
<dbReference type="GO" id="GO:0048489">
    <property type="term" value="P:synaptic vesicle transport"/>
    <property type="evidence" value="ECO:0000314"/>
    <property type="project" value="UniProtKB"/>
</dbReference>
<dbReference type="CDD" id="cd01865">
    <property type="entry name" value="Rab3"/>
    <property type="match status" value="1"/>
</dbReference>
<dbReference type="FunFam" id="3.40.50.300:FF:000206">
    <property type="entry name" value="Ras-related protein Rab-3C"/>
    <property type="match status" value="1"/>
</dbReference>
<dbReference type="Gene3D" id="3.40.50.300">
    <property type="entry name" value="P-loop containing nucleotide triphosphate hydrolases"/>
    <property type="match status" value="1"/>
</dbReference>
<dbReference type="InterPro" id="IPR027417">
    <property type="entry name" value="P-loop_NTPase"/>
</dbReference>
<dbReference type="InterPro" id="IPR037872">
    <property type="entry name" value="Rab3"/>
</dbReference>
<dbReference type="InterPro" id="IPR005225">
    <property type="entry name" value="Small_GTP-bd"/>
</dbReference>
<dbReference type="InterPro" id="IPR001806">
    <property type="entry name" value="Small_GTPase"/>
</dbReference>
<dbReference type="InterPro" id="IPR050305">
    <property type="entry name" value="Small_GTPase_Rab"/>
</dbReference>
<dbReference type="NCBIfam" id="TIGR00231">
    <property type="entry name" value="small_GTP"/>
    <property type="match status" value="1"/>
</dbReference>
<dbReference type="PANTHER" id="PTHR47980">
    <property type="entry name" value="LD44762P"/>
    <property type="match status" value="1"/>
</dbReference>
<dbReference type="Pfam" id="PF00071">
    <property type="entry name" value="Ras"/>
    <property type="match status" value="1"/>
</dbReference>
<dbReference type="PRINTS" id="PR00449">
    <property type="entry name" value="RASTRNSFRMNG"/>
</dbReference>
<dbReference type="SMART" id="SM00175">
    <property type="entry name" value="RAB"/>
    <property type="match status" value="1"/>
</dbReference>
<dbReference type="SMART" id="SM00176">
    <property type="entry name" value="RAN"/>
    <property type="match status" value="1"/>
</dbReference>
<dbReference type="SMART" id="SM00173">
    <property type="entry name" value="RAS"/>
    <property type="match status" value="1"/>
</dbReference>
<dbReference type="SMART" id="SM00174">
    <property type="entry name" value="RHO"/>
    <property type="match status" value="1"/>
</dbReference>
<dbReference type="SUPFAM" id="SSF52540">
    <property type="entry name" value="P-loop containing nucleoside triphosphate hydrolases"/>
    <property type="match status" value="1"/>
</dbReference>
<dbReference type="PROSITE" id="PS51419">
    <property type="entry name" value="RAB"/>
    <property type="match status" value="1"/>
</dbReference>
<gene>
    <name evidence="18" type="primary">Rab3a</name>
</gene>
<protein>
    <recommendedName>
        <fullName>Ras-related protein Rab-3A</fullName>
        <ecNumber evidence="2">3.6.5.2</ecNumber>
    </recommendedName>
</protein>
<comment type="function">
    <text evidence="2 3 7 11 14">The small GTPases Rab are key regulators of intracellular membrane trafficking, from the formation of transport vesicles to their fusion with membranes (By similarity). Rabs cycle between an inactive GDP-bound form and an active GTP-bound form that is able to recruit to membranes different sets of downstream effectors directly responsible for vesicle formation, movement, tethering and fusion (By similarity). RAB3A plays a central role in regulated exocytosis and secretion. Controls the recruitment, tethering and docking of secretory vesicles to the plasma membrane (PubMed:11598194). Upon stimulation, switches to its active GTP-bound form, cycles to vesicles and recruits effectors such as RIMS1, RIMS2, Rabphilin-3A/RPH3A, RPH3AL or SYTL4 to help the docking of vesicules onto the plasma membrane (By similarity). Upon GTP hydrolysis by GTPase-activating protein, dissociates from the vesicle membrane allowing the exocytosis to proceed (By similarity). Stimulates insulin secretion through interaction with RIMS2 isoform RIMS2 and RPH3AL effectors in pancreatic beta cells (PubMed:15159548, PubMed:20674857). Regulates calcium-dependent lysosome exocytosis and plasma membrane repair (PMR) via the interaction with 2 effectors, SYTL4 and myosin-9/MYH9 (By similarity). Acts as a positive regulator of acrosome content secretion in sperm cells by interacting with RIMS1 (By similarity). Plays a role in the regulation of dopamine release by interacting with synaptotagmin I/SYT (By similarity).</text>
</comment>
<comment type="catalytic activity">
    <reaction evidence="2">
        <text>GTP + H2O = GDP + phosphate + H(+)</text>
        <dbReference type="Rhea" id="RHEA:19669"/>
        <dbReference type="ChEBI" id="CHEBI:15377"/>
        <dbReference type="ChEBI" id="CHEBI:15378"/>
        <dbReference type="ChEBI" id="CHEBI:37565"/>
        <dbReference type="ChEBI" id="CHEBI:43474"/>
        <dbReference type="ChEBI" id="CHEBI:58189"/>
        <dbReference type="EC" id="3.6.5.2"/>
    </reaction>
    <physiologicalReaction direction="left-to-right" evidence="2">
        <dbReference type="Rhea" id="RHEA:19670"/>
    </physiologicalReaction>
</comment>
<comment type="cofactor">
    <cofactor evidence="3">
        <name>Mg(2+)</name>
        <dbReference type="ChEBI" id="CHEBI:18420"/>
    </cofactor>
</comment>
<comment type="activity regulation">
    <text evidence="2">Regulated by guanine nucleotide exchange factors (GEFs) including RAB3IL1 and MADD which promote the exchange of bound GDP for free GTP. Regulated by GTPase activating proteins (GAPs) including RAB3GAP1 and TBC1D10B which increase the GTP hydrolysis activity. Inhibited by GDP dissociation inhibitors (GDIs) which prevent Rab-GDP dissociation.</text>
</comment>
<comment type="subunit">
    <text evidence="2 3 5 6 8 9 10 12 13">Interacts with RIMS1 and RIMS2 (PubMed:11056535, PubMed:11431472, PubMed:12401793, PubMed:12578829). Interacts with Rabphilin-3A/RPH3A and Rab effector Noc2/RPH3AL (PubMed:12578829). Interacts with SYTL4 (PubMed:12590134). Interacts with RAB3IP. Interacts with SGSM1 and SGSM3 (PubMed:17509819). Interacts with SYT1 (By similarity). Interacts with MYH9; this interaction is essential for lysosome exocytosis and plasma membrane repair (By similarity). Interacts with STXBP1; this interaction promotes RAB3A dissociation from the vesicle membrane (By similarity). Interacts with SNCA (By similarity). Interacts with GDI1, GDI2, CHM and CHML; phosphorylation at Thr-86 disrupts these interactions (By similarity). Interacts with MADD (via uDENN domain); the GTP-bound form is preferred for interaction (PubMed:18849981).</text>
</comment>
<comment type="interaction">
    <interactant intactId="EBI-398393">
        <id>P63011</id>
    </interactant>
    <interactant intactId="EBI-398376">
        <id>P47708</id>
        <label>Rph3a</label>
    </interactant>
    <organismsDiffer>false</organismsDiffer>
    <experiments>2</experiments>
</comment>
<comment type="interaction">
    <interactant intactId="EBI-398393">
        <id>P63011</id>
    </interactant>
    <interactant intactId="EBI-2939487">
        <id>Q8TDW5</id>
        <label>SYTL5</label>
    </interactant>
    <organismsDiffer>true</organismsDiffer>
    <experiments>2</experiments>
</comment>
<comment type="subcellular location">
    <subcellularLocation>
        <location evidence="3">Cytoplasm</location>
        <location evidence="3">Cytosol</location>
    </subcellularLocation>
    <subcellularLocation>
        <location evidence="2">Lysosome</location>
    </subcellularLocation>
    <subcellularLocation>
        <location evidence="3">Cytoplasmic vesicle</location>
        <location evidence="3">Secretory vesicle</location>
    </subcellularLocation>
    <subcellularLocation>
        <location evidence="13">Cell projection</location>
        <location evidence="13">Axon</location>
    </subcellularLocation>
    <subcellularLocation>
        <location evidence="17">Cell membrane</location>
        <topology evidence="17">Lipid-anchor</topology>
        <orientation evidence="17">Cytoplasmic side</orientation>
    </subcellularLocation>
    <subcellularLocation>
        <location evidence="16">Presynapse</location>
    </subcellularLocation>
    <subcellularLocation>
        <location evidence="16">Postsynapse</location>
    </subcellularLocation>
    <text evidence="3">Cycles between a vesicle-associated GTP-bound form and a cytosolic GDP-bound form.</text>
</comment>
<comment type="tissue specificity">
    <text evidence="7 16">Expressed in the forebrain and hippocampus (at protein level) (PubMed:31651360). Found in active zone in brain nerve terminals (PubMed:11598194).</text>
</comment>
<comment type="domain">
    <text evidence="3">Switch 1, switch 2 and the interswitch regions are characteristic of Rab GTPases and mediate the interactions with Rab downstream effectors. The switch regions undergo conformational changes upon nucleotide binding which drives interaction with specific sets of effector proteins, with most effectors only binding to GTP-bound Rab.</text>
</comment>
<comment type="PTM">
    <text evidence="2">Phosphorylation of Thr-86 in the switch II region by LRRK2 prevents the association of RAB regulatory proteins, including CHM, CHML and RAB GDP dissociation inhibitors GDI1 and GDI2.</text>
</comment>
<comment type="disruption phenotype">
    <text evidence="7">RAB3-deficient mice show an incomplete and slow secretion response in brain nerve terminals after exhaustive stimulation. The replenishment of docked vesicles after exhaustive stimulation is also impaired.</text>
</comment>
<comment type="similarity">
    <text evidence="17">Belongs to the small GTPase superfamily. Rab family.</text>
</comment>
<evidence type="ECO:0000250" key="1"/>
<evidence type="ECO:0000250" key="2">
    <source>
        <dbReference type="UniProtKB" id="P20336"/>
    </source>
</evidence>
<evidence type="ECO:0000250" key="3">
    <source>
        <dbReference type="UniProtKB" id="P63012"/>
    </source>
</evidence>
<evidence type="ECO:0000256" key="4">
    <source>
        <dbReference type="SAM" id="MobiDB-lite"/>
    </source>
</evidence>
<evidence type="ECO:0000269" key="5">
    <source>
    </source>
</evidence>
<evidence type="ECO:0000269" key="6">
    <source>
    </source>
</evidence>
<evidence type="ECO:0000269" key="7">
    <source>
    </source>
</evidence>
<evidence type="ECO:0000269" key="8">
    <source>
    </source>
</evidence>
<evidence type="ECO:0000269" key="9">
    <source>
    </source>
</evidence>
<evidence type="ECO:0000269" key="10">
    <source>
    </source>
</evidence>
<evidence type="ECO:0000269" key="11">
    <source>
    </source>
</evidence>
<evidence type="ECO:0000269" key="12">
    <source>
    </source>
</evidence>
<evidence type="ECO:0000269" key="13">
    <source>
    </source>
</evidence>
<evidence type="ECO:0000269" key="14">
    <source>
    </source>
</evidence>
<evidence type="ECO:0000269" key="15">
    <source>
    </source>
</evidence>
<evidence type="ECO:0000269" key="16">
    <source>
    </source>
</evidence>
<evidence type="ECO:0000305" key="17"/>
<evidence type="ECO:0000312" key="18">
    <source>
        <dbReference type="MGI" id="MGI:97843"/>
    </source>
</evidence>
<evidence type="ECO:0007744" key="19">
    <source>
    </source>
</evidence>
<accession>P63011</accession>
<accession>P05713</accession>
<accession>Q3TSL4</accession>
<proteinExistence type="evidence at protein level"/>
<feature type="chain" id="PRO_0000121078" description="Ras-related protein Rab-3A">
    <location>
        <begin position="1"/>
        <end position="220"/>
    </location>
</feature>
<feature type="region of interest" description="Disordered" evidence="4">
    <location>
        <begin position="194"/>
        <end position="220"/>
    </location>
</feature>
<feature type="short sequence motif" description="Switch 1" evidence="3">
    <location>
        <begin position="49"/>
        <end position="58"/>
    </location>
</feature>
<feature type="short sequence motif" description="Switch 2" evidence="3">
    <location>
        <begin position="80"/>
        <end position="96"/>
    </location>
</feature>
<feature type="binding site" evidence="3">
    <location>
        <position position="31"/>
    </location>
    <ligand>
        <name>GTP</name>
        <dbReference type="ChEBI" id="CHEBI:37565"/>
    </ligand>
</feature>
<feature type="binding site" evidence="3">
    <location>
        <position position="32"/>
    </location>
    <ligand>
        <name>GTP</name>
        <dbReference type="ChEBI" id="CHEBI:37565"/>
    </ligand>
</feature>
<feature type="binding site" evidence="3">
    <location>
        <position position="33"/>
    </location>
    <ligand>
        <name>GTP</name>
        <dbReference type="ChEBI" id="CHEBI:37565"/>
    </ligand>
</feature>
<feature type="binding site" evidence="3">
    <location>
        <position position="34"/>
    </location>
    <ligand>
        <name>GTP</name>
        <dbReference type="ChEBI" id="CHEBI:37565"/>
    </ligand>
</feature>
<feature type="binding site" evidence="3">
    <location>
        <position position="35"/>
    </location>
    <ligand>
        <name>GTP</name>
        <dbReference type="ChEBI" id="CHEBI:37565"/>
    </ligand>
</feature>
<feature type="binding site" evidence="3">
    <location>
        <position position="36"/>
    </location>
    <ligand>
        <name>GTP</name>
        <dbReference type="ChEBI" id="CHEBI:37565"/>
    </ligand>
</feature>
<feature type="binding site" evidence="3">
    <location>
        <position position="36"/>
    </location>
    <ligand>
        <name>Mg(2+)</name>
        <dbReference type="ChEBI" id="CHEBI:18420"/>
    </ligand>
</feature>
<feature type="binding site" evidence="3">
    <location>
        <position position="37"/>
    </location>
    <ligand>
        <name>GTP</name>
        <dbReference type="ChEBI" id="CHEBI:37565"/>
    </ligand>
</feature>
<feature type="binding site" evidence="3">
    <location>
        <position position="48"/>
    </location>
    <ligand>
        <name>GTP</name>
        <dbReference type="ChEBI" id="CHEBI:37565"/>
    </ligand>
</feature>
<feature type="binding site" evidence="3">
    <location>
        <position position="49"/>
    </location>
    <ligand>
        <name>GTP</name>
        <dbReference type="ChEBI" id="CHEBI:37565"/>
    </ligand>
</feature>
<feature type="binding site" evidence="3">
    <location>
        <position position="53"/>
    </location>
    <ligand>
        <name>GTP</name>
        <dbReference type="ChEBI" id="CHEBI:37565"/>
    </ligand>
</feature>
<feature type="binding site" evidence="3">
    <location>
        <position position="54"/>
    </location>
    <ligand>
        <name>GTP</name>
        <dbReference type="ChEBI" id="CHEBI:37565"/>
    </ligand>
</feature>
<feature type="binding site" evidence="3">
    <location>
        <position position="54"/>
    </location>
    <ligand>
        <name>Mg(2+)</name>
        <dbReference type="ChEBI" id="CHEBI:18420"/>
    </ligand>
</feature>
<feature type="binding site" evidence="3">
    <location>
        <position position="77"/>
    </location>
    <ligand>
        <name>Mg(2+)</name>
        <dbReference type="ChEBI" id="CHEBI:18420"/>
    </ligand>
</feature>
<feature type="binding site" evidence="3">
    <location>
        <position position="80"/>
    </location>
    <ligand>
        <name>GTP</name>
        <dbReference type="ChEBI" id="CHEBI:37565"/>
    </ligand>
</feature>
<feature type="binding site" evidence="3">
    <location>
        <position position="135"/>
    </location>
    <ligand>
        <name>GTP</name>
        <dbReference type="ChEBI" id="CHEBI:37565"/>
    </ligand>
</feature>
<feature type="binding site" evidence="3">
    <location>
        <position position="136"/>
    </location>
    <ligand>
        <name>GTP</name>
        <dbReference type="ChEBI" id="CHEBI:37565"/>
    </ligand>
</feature>
<feature type="binding site" evidence="3">
    <location>
        <position position="138"/>
    </location>
    <ligand>
        <name>GTP</name>
        <dbReference type="ChEBI" id="CHEBI:37565"/>
    </ligand>
</feature>
<feature type="binding site" evidence="3">
    <location>
        <position position="166"/>
    </location>
    <ligand>
        <name>GTP</name>
        <dbReference type="ChEBI" id="CHEBI:37565"/>
    </ligand>
</feature>
<feature type="binding site" evidence="3">
    <location>
        <position position="167"/>
    </location>
    <ligand>
        <name>GTP</name>
        <dbReference type="ChEBI" id="CHEBI:37565"/>
    </ligand>
</feature>
<feature type="modified residue" description="Phosphothreonine; by LRRK2" evidence="15">
    <location>
        <position position="86"/>
    </location>
</feature>
<feature type="modified residue" description="Phosphoserine" evidence="19">
    <location>
        <position position="188"/>
    </location>
</feature>
<feature type="modified residue" description="Phosphoserine" evidence="19">
    <location>
        <position position="190"/>
    </location>
</feature>
<feature type="modified residue" description="Cysteine methyl ester" evidence="1">
    <location>
        <position position="220"/>
    </location>
</feature>
<feature type="lipid moiety-binding region" description="S-geranylgeranyl cysteine" evidence="1">
    <location>
        <position position="218"/>
    </location>
</feature>
<feature type="lipid moiety-binding region" description="S-geranylgeranyl cysteine" evidence="1">
    <location>
        <position position="220"/>
    </location>
</feature>
<feature type="mutagenesis site" description="Reduced axon localization and aggregation in neuronal cell bodies." evidence="13">
    <original>T</original>
    <variation>N</variation>
    <location>
        <position position="36"/>
    </location>
</feature>
<feature type="mutagenesis site" description="No effect on neurite transport. Reduced axonal transport in a Madd RNAi-mediated knockdown or a Kif1b knockout background." evidence="13">
    <original>Q</original>
    <variation>L</variation>
    <location>
        <position position="81"/>
    </location>
</feature>
<keyword id="KW-1003">Cell membrane</keyword>
<keyword id="KW-0966">Cell projection</keyword>
<keyword id="KW-0963">Cytoplasm</keyword>
<keyword id="KW-0968">Cytoplasmic vesicle</keyword>
<keyword id="KW-0903">Direct protein sequencing</keyword>
<keyword id="KW-0268">Exocytosis</keyword>
<keyword id="KW-0342">GTP-binding</keyword>
<keyword id="KW-0378">Hydrolase</keyword>
<keyword id="KW-0449">Lipoprotein</keyword>
<keyword id="KW-0458">Lysosome</keyword>
<keyword id="KW-0460">Magnesium</keyword>
<keyword id="KW-0472">Membrane</keyword>
<keyword id="KW-0479">Metal-binding</keyword>
<keyword id="KW-0488">Methylation</keyword>
<keyword id="KW-0547">Nucleotide-binding</keyword>
<keyword id="KW-0597">Phosphoprotein</keyword>
<keyword id="KW-0636">Prenylation</keyword>
<keyword id="KW-0653">Protein transport</keyword>
<keyword id="KW-1185">Reference proteome</keyword>
<keyword id="KW-0770">Synapse</keyword>
<keyword id="KW-0813">Transport</keyword>
<sequence length="220" mass="24970">MASATDSRYGQKESSDQNFDYMFKILIIGNSSVGKTSFLFRYADDSFTPAFVSTVGIDFKVKTIYRNDKRIKLQIWDTAGQERYRTITTAYYRGAMGFILMYDITNEESFNAVQDWSTQIKTYSWDNAQVLLVGNKCDMEDERVVSSERGRQLADHLGFEFFEASAKDNINVKQTFERLVDVICEKMSESLDTADPAVTGAKQGPQLTDQQAPPHQDCAC</sequence>
<reference key="1">
    <citation type="journal article" date="1993" name="Biochem. J.">
        <title>Structure of the murine rab3A gene: correlation of genomic organization with antibody epitopes.</title>
        <authorList>
            <person name="Baumert M."/>
            <person name="Fischer von Mollard G."/>
            <person name="Jahn R."/>
            <person name="Suedhof T.C."/>
        </authorList>
    </citation>
    <scope>NUCLEOTIDE SEQUENCE [GENOMIC DNA]</scope>
</reference>
<reference key="2">
    <citation type="journal article" date="2005" name="Science">
        <title>The transcriptional landscape of the mammalian genome.</title>
        <authorList>
            <person name="Carninci P."/>
            <person name="Kasukawa T."/>
            <person name="Katayama S."/>
            <person name="Gough J."/>
            <person name="Frith M.C."/>
            <person name="Maeda N."/>
            <person name="Oyama R."/>
            <person name="Ravasi T."/>
            <person name="Lenhard B."/>
            <person name="Wells C."/>
            <person name="Kodzius R."/>
            <person name="Shimokawa K."/>
            <person name="Bajic V.B."/>
            <person name="Brenner S.E."/>
            <person name="Batalov S."/>
            <person name="Forrest A.R."/>
            <person name="Zavolan M."/>
            <person name="Davis M.J."/>
            <person name="Wilming L.G."/>
            <person name="Aidinis V."/>
            <person name="Allen J.E."/>
            <person name="Ambesi-Impiombato A."/>
            <person name="Apweiler R."/>
            <person name="Aturaliya R.N."/>
            <person name="Bailey T.L."/>
            <person name="Bansal M."/>
            <person name="Baxter L."/>
            <person name="Beisel K.W."/>
            <person name="Bersano T."/>
            <person name="Bono H."/>
            <person name="Chalk A.M."/>
            <person name="Chiu K.P."/>
            <person name="Choudhary V."/>
            <person name="Christoffels A."/>
            <person name="Clutterbuck D.R."/>
            <person name="Crowe M.L."/>
            <person name="Dalla E."/>
            <person name="Dalrymple B.P."/>
            <person name="de Bono B."/>
            <person name="Della Gatta G."/>
            <person name="di Bernardo D."/>
            <person name="Down T."/>
            <person name="Engstrom P."/>
            <person name="Fagiolini M."/>
            <person name="Faulkner G."/>
            <person name="Fletcher C.F."/>
            <person name="Fukushima T."/>
            <person name="Furuno M."/>
            <person name="Futaki S."/>
            <person name="Gariboldi M."/>
            <person name="Georgii-Hemming P."/>
            <person name="Gingeras T.R."/>
            <person name="Gojobori T."/>
            <person name="Green R.E."/>
            <person name="Gustincich S."/>
            <person name="Harbers M."/>
            <person name="Hayashi Y."/>
            <person name="Hensch T.K."/>
            <person name="Hirokawa N."/>
            <person name="Hill D."/>
            <person name="Huminiecki L."/>
            <person name="Iacono M."/>
            <person name="Ikeo K."/>
            <person name="Iwama A."/>
            <person name="Ishikawa T."/>
            <person name="Jakt M."/>
            <person name="Kanapin A."/>
            <person name="Katoh M."/>
            <person name="Kawasawa Y."/>
            <person name="Kelso J."/>
            <person name="Kitamura H."/>
            <person name="Kitano H."/>
            <person name="Kollias G."/>
            <person name="Krishnan S.P."/>
            <person name="Kruger A."/>
            <person name="Kummerfeld S.K."/>
            <person name="Kurochkin I.V."/>
            <person name="Lareau L.F."/>
            <person name="Lazarevic D."/>
            <person name="Lipovich L."/>
            <person name="Liu J."/>
            <person name="Liuni S."/>
            <person name="McWilliam S."/>
            <person name="Madan Babu M."/>
            <person name="Madera M."/>
            <person name="Marchionni L."/>
            <person name="Matsuda H."/>
            <person name="Matsuzawa S."/>
            <person name="Miki H."/>
            <person name="Mignone F."/>
            <person name="Miyake S."/>
            <person name="Morris K."/>
            <person name="Mottagui-Tabar S."/>
            <person name="Mulder N."/>
            <person name="Nakano N."/>
            <person name="Nakauchi H."/>
            <person name="Ng P."/>
            <person name="Nilsson R."/>
            <person name="Nishiguchi S."/>
            <person name="Nishikawa S."/>
            <person name="Nori F."/>
            <person name="Ohara O."/>
            <person name="Okazaki Y."/>
            <person name="Orlando V."/>
            <person name="Pang K.C."/>
            <person name="Pavan W.J."/>
            <person name="Pavesi G."/>
            <person name="Pesole G."/>
            <person name="Petrovsky N."/>
            <person name="Piazza S."/>
            <person name="Reed J."/>
            <person name="Reid J.F."/>
            <person name="Ring B.Z."/>
            <person name="Ringwald M."/>
            <person name="Rost B."/>
            <person name="Ruan Y."/>
            <person name="Salzberg S.L."/>
            <person name="Sandelin A."/>
            <person name="Schneider C."/>
            <person name="Schoenbach C."/>
            <person name="Sekiguchi K."/>
            <person name="Semple C.A."/>
            <person name="Seno S."/>
            <person name="Sessa L."/>
            <person name="Sheng Y."/>
            <person name="Shibata Y."/>
            <person name="Shimada H."/>
            <person name="Shimada K."/>
            <person name="Silva D."/>
            <person name="Sinclair B."/>
            <person name="Sperling S."/>
            <person name="Stupka E."/>
            <person name="Sugiura K."/>
            <person name="Sultana R."/>
            <person name="Takenaka Y."/>
            <person name="Taki K."/>
            <person name="Tammoja K."/>
            <person name="Tan S.L."/>
            <person name="Tang S."/>
            <person name="Taylor M.S."/>
            <person name="Tegner J."/>
            <person name="Teichmann S.A."/>
            <person name="Ueda H.R."/>
            <person name="van Nimwegen E."/>
            <person name="Verardo R."/>
            <person name="Wei C.L."/>
            <person name="Yagi K."/>
            <person name="Yamanishi H."/>
            <person name="Zabarovsky E."/>
            <person name="Zhu S."/>
            <person name="Zimmer A."/>
            <person name="Hide W."/>
            <person name="Bult C."/>
            <person name="Grimmond S.M."/>
            <person name="Teasdale R.D."/>
            <person name="Liu E.T."/>
            <person name="Brusic V."/>
            <person name="Quackenbush J."/>
            <person name="Wahlestedt C."/>
            <person name="Mattick J.S."/>
            <person name="Hume D.A."/>
            <person name="Kai C."/>
            <person name="Sasaki D."/>
            <person name="Tomaru Y."/>
            <person name="Fukuda S."/>
            <person name="Kanamori-Katayama M."/>
            <person name="Suzuki M."/>
            <person name="Aoki J."/>
            <person name="Arakawa T."/>
            <person name="Iida J."/>
            <person name="Imamura K."/>
            <person name="Itoh M."/>
            <person name="Kato T."/>
            <person name="Kawaji H."/>
            <person name="Kawagashira N."/>
            <person name="Kawashima T."/>
            <person name="Kojima M."/>
            <person name="Kondo S."/>
            <person name="Konno H."/>
            <person name="Nakano K."/>
            <person name="Ninomiya N."/>
            <person name="Nishio T."/>
            <person name="Okada M."/>
            <person name="Plessy C."/>
            <person name="Shibata K."/>
            <person name="Shiraki T."/>
            <person name="Suzuki S."/>
            <person name="Tagami M."/>
            <person name="Waki K."/>
            <person name="Watahiki A."/>
            <person name="Okamura-Oho Y."/>
            <person name="Suzuki H."/>
            <person name="Kawai J."/>
            <person name="Hayashizaki Y."/>
        </authorList>
    </citation>
    <scope>NUCLEOTIDE SEQUENCE [LARGE SCALE MRNA]</scope>
    <source>
        <strain>C57BL/6J</strain>
        <tissue>Cerebellum</tissue>
        <tissue>Visual cortex</tissue>
    </source>
</reference>
<reference key="3">
    <citation type="journal article" date="2004" name="Genome Res.">
        <title>The status, quality, and expansion of the NIH full-length cDNA project: the Mammalian Gene Collection (MGC).</title>
        <authorList>
            <consortium name="The MGC Project Team"/>
        </authorList>
    </citation>
    <scope>NUCLEOTIDE SEQUENCE [LARGE SCALE MRNA]</scope>
    <source>
        <tissue>Eye</tissue>
    </source>
</reference>
<reference key="4">
    <citation type="submission" date="2007-04" db="UniProtKB">
        <authorList>
            <person name="Lubec G."/>
            <person name="Kang S.U."/>
        </authorList>
    </citation>
    <scope>PROTEIN SEQUENCE OF 13-35; 42-60; 73-83; 122-136; 152-167 AND 179-202</scope>
    <scope>IDENTIFICATION BY MASS SPECTROMETRY</scope>
    <source>
        <strain>C57BL/6J</strain>
        <tissue>Brain</tissue>
    </source>
</reference>
<reference key="5">
    <citation type="journal article" date="2000" name="Nat. Cell Biol.">
        <title>cAMP-GEFII is a direct target of cAMP in regulated exocytosis.</title>
        <authorList>
            <person name="Ozaki N."/>
            <person name="Shibasaki T."/>
            <person name="Kashima Y."/>
            <person name="Miki T."/>
            <person name="Takahashi K."/>
            <person name="Ueno H."/>
            <person name="Sunaga Y."/>
            <person name="Yano H."/>
            <person name="Matsuura Y."/>
            <person name="Iwanaga T."/>
            <person name="Takai Y."/>
            <person name="Seino S."/>
        </authorList>
    </citation>
    <scope>INTERACTION WITH RIMS1 AND RIMS2</scope>
</reference>
<reference key="6">
    <citation type="journal article" date="2001" name="J. Biol. Chem.">
        <title>Rim1 and rabphilin-3 bind Rab3-GTP by composite determinants partially related through N-terminal alpha-helix motifs.</title>
        <authorList>
            <person name="Wang X."/>
            <person name="Hu B."/>
            <person name="Zimmermann B."/>
            <person name="Kilimann M.W."/>
        </authorList>
    </citation>
    <scope>INTERACTION WITH RIMS1</scope>
</reference>
<reference key="7">
    <citation type="journal article" date="2001" name="Mol. Biol. Cell">
        <title>Rab3a is involved in transport of synaptic vesicles to the active zone in mouse brain nerve terminals.</title>
        <authorList>
            <person name="Leenders A.G."/>
            <person name="Lopes da Silva F.H."/>
            <person name="Ghijsen W.E."/>
            <person name="Verhage M."/>
        </authorList>
    </citation>
    <scope>FUNCTION</scope>
    <scope>DISRUPTION PHENOTYPE</scope>
    <scope>TISSUE SPECIFICITY</scope>
</reference>
<reference key="8">
    <citation type="journal article" date="2002" name="J. Biol. Chem.">
        <title>Piccolo, a Ca2+ sensor in pancreatic beta-cells. Involvement of cAMP-GEFII.Rim2.Piccolo complex in cAMP-dependent exocytosis.</title>
        <authorList>
            <person name="Fujimoto K."/>
            <person name="Shibasaki T."/>
            <person name="Yokoi N."/>
            <person name="Kashima Y."/>
            <person name="Matsumoto M."/>
            <person name="Sasaki T."/>
            <person name="Tajima N."/>
            <person name="Iwanaga T."/>
            <person name="Seino S."/>
        </authorList>
    </citation>
    <scope>INTERACTION WITH RIMS2</scope>
</reference>
<reference key="9">
    <citation type="journal article" date="2003" name="J. Biol. Chem.">
        <title>Distinct Rab binding specificity of Rim1, Rim2, rabphilin, and Noc2. Identification of a critical determinant of Rab3A/Rab27A recognition by Rim2.</title>
        <authorList>
            <person name="Fukuda M."/>
        </authorList>
    </citation>
    <scope>INTERACTION WITH RIMS1; RIMS2; RPH3A AND RPH3AL</scope>
</reference>
<reference key="10">
    <citation type="journal article" date="2003" name="J. Biol. Chem.">
        <title>Slp4-a/granuphilin-a inhibits dense-core vesicle exocytosis through interaction with the GDP-bound form of Rab27A in PC12 cells.</title>
        <authorList>
            <person name="Fukuda M."/>
        </authorList>
    </citation>
    <scope>INTERACTION WITH SYTL4</scope>
</reference>
<reference key="11">
    <citation type="journal article" date="2004" name="Proc. Natl. Acad. Sci. U.S.A.">
        <title>Noc2 is essential in normal regulation of exocytosis in endocrine and exocrine cells.</title>
        <authorList>
            <person name="Matsumoto M."/>
            <person name="Miki T."/>
            <person name="Shibasaki T."/>
            <person name="Kawaguchi M."/>
            <person name="Shinozaki H."/>
            <person name="Nio J."/>
            <person name="Saraya A."/>
            <person name="Koseki H."/>
            <person name="Miyazaki M."/>
            <person name="Iwanaga T."/>
            <person name="Seino S."/>
        </authorList>
    </citation>
    <scope>FUNCTION</scope>
</reference>
<reference key="12">
    <citation type="journal article" date="2007" name="Genomics">
        <title>Identification of three novel proteins (SGSM1, 2, 3) which modulate small G protein (RAP and RAB)-mediated signaling pathway.</title>
        <authorList>
            <person name="Yang H."/>
            <person name="Sasaki T."/>
            <person name="Minoshima S."/>
            <person name="Shimizu N."/>
        </authorList>
    </citation>
    <scope>INTERACTION WITH SGSM1 AND SGSM3</scope>
</reference>
<reference key="13">
    <citation type="journal article" date="2008" name="Nat. Cell Biol.">
        <title>KIF1Bbeta- and KIF1A-mediated axonal transport of presynaptic regulator Rab3 occurs in a GTP-dependent manner through DENN/MADD.</title>
        <authorList>
            <person name="Niwa S."/>
            <person name="Tanaka Y."/>
            <person name="Hirokawa N."/>
        </authorList>
    </citation>
    <scope>INTERACTION WITH MADD</scope>
    <scope>SUBCELLULAR LOCATION</scope>
    <scope>MUTAGENESIS OF THR-36 AND GLN-81</scope>
</reference>
<reference key="14">
    <citation type="journal article" date="2010" name="Cell Metab.">
        <title>Rim2alpha determines docking and priming states in insulin granule exocytosis.</title>
        <authorList>
            <person name="Yasuda T."/>
            <person name="Shibasaki T."/>
            <person name="Minami K."/>
            <person name="Takahashi H."/>
            <person name="Mizoguchi A."/>
            <person name="Uriu Y."/>
            <person name="Numata T."/>
            <person name="Mori Y."/>
            <person name="Miyazaki J."/>
            <person name="Miki T."/>
            <person name="Seino S."/>
        </authorList>
    </citation>
    <scope>FUNCTION</scope>
    <scope>INTERACTION WITH RIMS2</scope>
</reference>
<reference key="15">
    <citation type="journal article" date="2010" name="Cell">
        <title>A tissue-specific atlas of mouse protein phosphorylation and expression.</title>
        <authorList>
            <person name="Huttlin E.L."/>
            <person name="Jedrychowski M.P."/>
            <person name="Elias J.E."/>
            <person name="Goswami T."/>
            <person name="Rad R."/>
            <person name="Beausoleil S.A."/>
            <person name="Villen J."/>
            <person name="Haas W."/>
            <person name="Sowa M.E."/>
            <person name="Gygi S.P."/>
        </authorList>
    </citation>
    <scope>PHOSPHORYLATION [LARGE SCALE ANALYSIS] AT SER-188 AND SER-190</scope>
    <scope>IDENTIFICATION BY MASS SPECTROMETRY [LARGE SCALE ANALYSIS]</scope>
    <source>
        <tissue>Brain</tissue>
        <tissue>Brown adipose tissue</tissue>
        <tissue>Heart</tissue>
        <tissue>Kidney</tissue>
        <tissue>Testis</tissue>
    </source>
</reference>
<reference key="16">
    <citation type="journal article" date="2017" name="Elife">
        <title>Systematic proteomic analysis of LRRK2-mediated Rab GTPase phosphorylation establishes a connection to ciliogenesis.</title>
        <authorList>
            <person name="Steger M."/>
            <person name="Diez F."/>
            <person name="Dhekne H.S."/>
            <person name="Lis P."/>
            <person name="Nirujogi R.S."/>
            <person name="Karayel O."/>
            <person name="Tonelli F."/>
            <person name="Martinez T.N."/>
            <person name="Lorentzen E."/>
            <person name="Pfeffer S.R."/>
            <person name="Alessi D.R."/>
            <person name="Mann M."/>
        </authorList>
    </citation>
    <scope>PHOSPHORYLATION AT THR-86</scope>
</reference>
<reference key="17">
    <citation type="journal article" date="2019" name="Acta Neuropathol. Commun.">
        <title>Synaptic localization of C9orf72 regulates post-synaptic glutamate receptor 1 levels.</title>
        <authorList>
            <person name="Xiao S."/>
            <person name="McKeever P.M."/>
            <person name="Lau A."/>
            <person name="Robertson J."/>
        </authorList>
    </citation>
    <scope>SUBCELLULAR LOCATION</scope>
    <scope>TISSUE SPECIFICITY</scope>
</reference>
<organism>
    <name type="scientific">Mus musculus</name>
    <name type="common">Mouse</name>
    <dbReference type="NCBI Taxonomy" id="10090"/>
    <lineage>
        <taxon>Eukaryota</taxon>
        <taxon>Metazoa</taxon>
        <taxon>Chordata</taxon>
        <taxon>Craniata</taxon>
        <taxon>Vertebrata</taxon>
        <taxon>Euteleostomi</taxon>
        <taxon>Mammalia</taxon>
        <taxon>Eutheria</taxon>
        <taxon>Euarchontoglires</taxon>
        <taxon>Glires</taxon>
        <taxon>Rodentia</taxon>
        <taxon>Myomorpha</taxon>
        <taxon>Muroidea</taxon>
        <taxon>Muridae</taxon>
        <taxon>Murinae</taxon>
        <taxon>Mus</taxon>
        <taxon>Mus</taxon>
    </lineage>
</organism>
<name>RAB3A_MOUSE</name>